<protein>
    <recommendedName>
        <fullName evidence="1">Alanine racemase</fullName>
        <ecNumber evidence="1">5.1.1.1</ecNumber>
    </recommendedName>
</protein>
<sequence length="358" mass="39378">MKGATAIINLKSLRHNLEKIQQYAPKSRLMAVVKANAYGHGLLTVAQALKNADYFSVARIEEALTLRSGGIIKPILLLEGFFSLEDLAVLQVNHIETVIHNFEQLVALEKVRLPEPVRVWMKIDTGMHRLGVRLEQADAFYQRLQNCPNVAKPIHIITHLSDVNPHHPVVTDQQIRSFDAFVQGKPGQKSIAASGAILLCPQSHRDVVRPGIALYGISPFEHFIGRDYGLLPVMTLQSPLIAVREHKAGETVGYAGEWISQTATFLGVLAIGYGDGYPQSAPTGTPVWINDRQVPIVGRVSMDMISVDLGRDATDKVGDRAVLWGDQLSLEKVASYIGYTAYELVSKLTGRVAISYVN</sequence>
<keyword id="KW-0413">Isomerase</keyword>
<keyword id="KW-0663">Pyridoxal phosphate</keyword>
<organism>
    <name type="scientific">Hamiltonella defensa subsp. Acyrthosiphon pisum (strain 5AT)</name>
    <dbReference type="NCBI Taxonomy" id="572265"/>
    <lineage>
        <taxon>Bacteria</taxon>
        <taxon>Pseudomonadati</taxon>
        <taxon>Pseudomonadota</taxon>
        <taxon>Gammaproteobacteria</taxon>
        <taxon>Enterobacterales</taxon>
        <taxon>Enterobacteriaceae</taxon>
        <taxon>aphid secondary symbionts</taxon>
        <taxon>Candidatus Hamiltonella</taxon>
    </lineage>
</organism>
<evidence type="ECO:0000255" key="1">
    <source>
        <dbReference type="HAMAP-Rule" id="MF_01201"/>
    </source>
</evidence>
<reference key="1">
    <citation type="journal article" date="2009" name="Proc. Natl. Acad. Sci. U.S.A.">
        <title>Hamiltonella defensa, genome evolution of protective bacterial endosymbiont from pathogenic ancestors.</title>
        <authorList>
            <person name="Degnan P.H."/>
            <person name="Yu Y."/>
            <person name="Sisneros N."/>
            <person name="Wing R.A."/>
            <person name="Moran N.A."/>
        </authorList>
    </citation>
    <scope>NUCLEOTIDE SEQUENCE [LARGE SCALE GENOMIC DNA]</scope>
    <source>
        <strain>5AT</strain>
    </source>
</reference>
<gene>
    <name type="primary">alr</name>
    <name type="ordered locus">HDEF_0679</name>
</gene>
<name>ALR_HAMD5</name>
<accession>C4K4C4</accession>
<proteinExistence type="inferred from homology"/>
<feature type="chain" id="PRO_1000213835" description="Alanine racemase">
    <location>
        <begin position="1"/>
        <end position="358"/>
    </location>
</feature>
<feature type="active site" description="Proton acceptor; specific for D-alanine" evidence="1">
    <location>
        <position position="34"/>
    </location>
</feature>
<feature type="active site" description="Proton acceptor; specific for L-alanine" evidence="1">
    <location>
        <position position="254"/>
    </location>
</feature>
<feature type="binding site" evidence="1">
    <location>
        <position position="129"/>
    </location>
    <ligand>
        <name>substrate</name>
    </ligand>
</feature>
<feature type="binding site" evidence="1">
    <location>
        <position position="302"/>
    </location>
    <ligand>
        <name>substrate</name>
    </ligand>
</feature>
<feature type="modified residue" description="N6-(pyridoxal phosphate)lysine" evidence="1">
    <location>
        <position position="34"/>
    </location>
</feature>
<dbReference type="EC" id="5.1.1.1" evidence="1"/>
<dbReference type="EMBL" id="CP001277">
    <property type="protein sequence ID" value="ACQ67417.1"/>
    <property type="molecule type" value="Genomic_DNA"/>
</dbReference>
<dbReference type="RefSeq" id="WP_015873238.1">
    <property type="nucleotide sequence ID" value="NC_012751.1"/>
</dbReference>
<dbReference type="SMR" id="C4K4C4"/>
<dbReference type="STRING" id="572265.HDEF_0679"/>
<dbReference type="GeneID" id="66260538"/>
<dbReference type="KEGG" id="hde:HDEF_0679"/>
<dbReference type="eggNOG" id="COG0787">
    <property type="taxonomic scope" value="Bacteria"/>
</dbReference>
<dbReference type="HOGENOM" id="CLU_028393_1_0_6"/>
<dbReference type="UniPathway" id="UPA00042">
    <property type="reaction ID" value="UER00497"/>
</dbReference>
<dbReference type="Proteomes" id="UP000002334">
    <property type="component" value="Chromosome"/>
</dbReference>
<dbReference type="GO" id="GO:0005829">
    <property type="term" value="C:cytosol"/>
    <property type="evidence" value="ECO:0007669"/>
    <property type="project" value="TreeGrafter"/>
</dbReference>
<dbReference type="GO" id="GO:0008784">
    <property type="term" value="F:alanine racemase activity"/>
    <property type="evidence" value="ECO:0007669"/>
    <property type="project" value="UniProtKB-UniRule"/>
</dbReference>
<dbReference type="GO" id="GO:0030170">
    <property type="term" value="F:pyridoxal phosphate binding"/>
    <property type="evidence" value="ECO:0007669"/>
    <property type="project" value="UniProtKB-UniRule"/>
</dbReference>
<dbReference type="GO" id="GO:0030632">
    <property type="term" value="P:D-alanine biosynthetic process"/>
    <property type="evidence" value="ECO:0007669"/>
    <property type="project" value="UniProtKB-UniRule"/>
</dbReference>
<dbReference type="CDD" id="cd06827">
    <property type="entry name" value="PLPDE_III_AR_proteobact"/>
    <property type="match status" value="1"/>
</dbReference>
<dbReference type="FunFam" id="2.40.37.10:FF:000002">
    <property type="entry name" value="Alanine racemase"/>
    <property type="match status" value="1"/>
</dbReference>
<dbReference type="FunFam" id="3.20.20.10:FF:000002">
    <property type="entry name" value="Alanine racemase"/>
    <property type="match status" value="1"/>
</dbReference>
<dbReference type="Gene3D" id="3.20.20.10">
    <property type="entry name" value="Alanine racemase"/>
    <property type="match status" value="1"/>
</dbReference>
<dbReference type="Gene3D" id="2.40.37.10">
    <property type="entry name" value="Lyase, Ornithine Decarboxylase, Chain A, domain 1"/>
    <property type="match status" value="1"/>
</dbReference>
<dbReference type="HAMAP" id="MF_01201">
    <property type="entry name" value="Ala_racemase"/>
    <property type="match status" value="1"/>
</dbReference>
<dbReference type="InterPro" id="IPR000821">
    <property type="entry name" value="Ala_racemase"/>
</dbReference>
<dbReference type="InterPro" id="IPR009006">
    <property type="entry name" value="Ala_racemase/Decarboxylase_C"/>
</dbReference>
<dbReference type="InterPro" id="IPR011079">
    <property type="entry name" value="Ala_racemase_C"/>
</dbReference>
<dbReference type="InterPro" id="IPR001608">
    <property type="entry name" value="Ala_racemase_N"/>
</dbReference>
<dbReference type="InterPro" id="IPR020622">
    <property type="entry name" value="Ala_racemase_pyridoxalP-BS"/>
</dbReference>
<dbReference type="InterPro" id="IPR029066">
    <property type="entry name" value="PLP-binding_barrel"/>
</dbReference>
<dbReference type="NCBIfam" id="TIGR00492">
    <property type="entry name" value="alr"/>
    <property type="match status" value="1"/>
</dbReference>
<dbReference type="PANTHER" id="PTHR30511">
    <property type="entry name" value="ALANINE RACEMASE"/>
    <property type="match status" value="1"/>
</dbReference>
<dbReference type="PANTHER" id="PTHR30511:SF4">
    <property type="entry name" value="ALANINE RACEMASE, BIOSYNTHETIC"/>
    <property type="match status" value="1"/>
</dbReference>
<dbReference type="Pfam" id="PF00842">
    <property type="entry name" value="Ala_racemase_C"/>
    <property type="match status" value="1"/>
</dbReference>
<dbReference type="Pfam" id="PF01168">
    <property type="entry name" value="Ala_racemase_N"/>
    <property type="match status" value="1"/>
</dbReference>
<dbReference type="PRINTS" id="PR00992">
    <property type="entry name" value="ALARACEMASE"/>
</dbReference>
<dbReference type="SMART" id="SM01005">
    <property type="entry name" value="Ala_racemase_C"/>
    <property type="match status" value="1"/>
</dbReference>
<dbReference type="SUPFAM" id="SSF50621">
    <property type="entry name" value="Alanine racemase C-terminal domain-like"/>
    <property type="match status" value="1"/>
</dbReference>
<dbReference type="SUPFAM" id="SSF51419">
    <property type="entry name" value="PLP-binding barrel"/>
    <property type="match status" value="1"/>
</dbReference>
<dbReference type="PROSITE" id="PS00395">
    <property type="entry name" value="ALANINE_RACEMASE"/>
    <property type="match status" value="1"/>
</dbReference>
<comment type="function">
    <text evidence="1">Catalyzes the interconversion of L-alanine and D-alanine. May also act on other amino acids.</text>
</comment>
<comment type="catalytic activity">
    <reaction evidence="1">
        <text>L-alanine = D-alanine</text>
        <dbReference type="Rhea" id="RHEA:20249"/>
        <dbReference type="ChEBI" id="CHEBI:57416"/>
        <dbReference type="ChEBI" id="CHEBI:57972"/>
        <dbReference type="EC" id="5.1.1.1"/>
    </reaction>
</comment>
<comment type="cofactor">
    <cofactor evidence="1">
        <name>pyridoxal 5'-phosphate</name>
        <dbReference type="ChEBI" id="CHEBI:597326"/>
    </cofactor>
</comment>
<comment type="pathway">
    <text evidence="1">Amino-acid biosynthesis; D-alanine biosynthesis; D-alanine from L-alanine: step 1/1.</text>
</comment>
<comment type="similarity">
    <text evidence="1">Belongs to the alanine racemase family.</text>
</comment>